<proteinExistence type="inferred from homology"/>
<keyword id="KW-0997">Cell inner membrane</keyword>
<keyword id="KW-1003">Cell membrane</keyword>
<keyword id="KW-0328">Glycosyltransferase</keyword>
<keyword id="KW-0441">Lipid A biosynthesis</keyword>
<keyword id="KW-0444">Lipid biosynthesis</keyword>
<keyword id="KW-0443">Lipid metabolism</keyword>
<keyword id="KW-0448">Lipopolysaccharide biosynthesis</keyword>
<keyword id="KW-0472">Membrane</keyword>
<keyword id="KW-0808">Transferase</keyword>
<keyword id="KW-0812">Transmembrane</keyword>
<keyword id="KW-1133">Transmembrane helix</keyword>
<sequence>MMKSIRYYLAFAAFIALYYVIPVNSRLLWQPDETRYAEISREMLASGDWIVPHFLGLRYFEKPIAGYWINSLGQWLFGATNFGVRAGAILTTLLAAALVAWLTFRLWRDKRTALLASVIFLSLFAVYSIGTYAVLDPMIALWLTAGMCCFWQGMQATTRTGKIGMFLLLGATCGLGVLTKGFLALAVPVVSVLPWVIVQKRWKDFLLYGWLAVLSCFVVVLPWAIAIARREADFWHYFFWVEHIQRFAMSDAQHKAPFWYYLPVLLAGSLPWLGLLPGALKLGWRERNGAFYLLGWTIMPLLFFSIAKGKLPTYVLSCFAPIAILMARFVLHNVKEGVAALRVNGGINLVFGIIGIVAAFVVSSWGPLKSPVWTHIETYKVFCVWGVFTVWAFVGWYSLYHSQKYLLPAFCPLGLALLFGFSIPDRVMESKQPQFFVEMTQAPLASSRYILADNVGVAAGLAWSLKRDDIMLYGHAGELRYGLSYPDVQDKFVKADDFNAWLNQHRQEGIITLVLSIAKDENISALSLPPADNIDYQGRLVLIQYRPK</sequence>
<dbReference type="EC" id="2.4.2.43" evidence="1"/>
<dbReference type="EMBL" id="CP000886">
    <property type="protein sequence ID" value="ABX66106.1"/>
    <property type="molecule type" value="Genomic_DNA"/>
</dbReference>
<dbReference type="RefSeq" id="WP_000978053.1">
    <property type="nucleotide sequence ID" value="NC_010102.1"/>
</dbReference>
<dbReference type="SMR" id="A9N5B0"/>
<dbReference type="CAZy" id="GT83">
    <property type="family name" value="Glycosyltransferase Family 83"/>
</dbReference>
<dbReference type="KEGG" id="spq:SPAB_00680"/>
<dbReference type="PATRIC" id="fig|1016998.12.peg.640"/>
<dbReference type="HOGENOM" id="CLU_019200_2_1_6"/>
<dbReference type="BioCyc" id="SENT1016998:SPAB_RS02830-MONOMER"/>
<dbReference type="UniPathway" id="UPA00037"/>
<dbReference type="Proteomes" id="UP000008556">
    <property type="component" value="Chromosome"/>
</dbReference>
<dbReference type="GO" id="GO:0005886">
    <property type="term" value="C:plasma membrane"/>
    <property type="evidence" value="ECO:0007669"/>
    <property type="project" value="UniProtKB-SubCell"/>
</dbReference>
<dbReference type="GO" id="GO:0103015">
    <property type="term" value="F:4-amino-4-deoxy-L-arabinose transferase activity"/>
    <property type="evidence" value="ECO:0007669"/>
    <property type="project" value="UniProtKB-EC"/>
</dbReference>
<dbReference type="GO" id="GO:0000030">
    <property type="term" value="F:mannosyltransferase activity"/>
    <property type="evidence" value="ECO:0007669"/>
    <property type="project" value="InterPro"/>
</dbReference>
<dbReference type="GO" id="GO:0009245">
    <property type="term" value="P:lipid A biosynthetic process"/>
    <property type="evidence" value="ECO:0007669"/>
    <property type="project" value="UniProtKB-UniRule"/>
</dbReference>
<dbReference type="GO" id="GO:0009103">
    <property type="term" value="P:lipopolysaccharide biosynthetic process"/>
    <property type="evidence" value="ECO:0007669"/>
    <property type="project" value="UniProtKB-KW"/>
</dbReference>
<dbReference type="GO" id="GO:0006493">
    <property type="term" value="P:protein O-linked glycosylation"/>
    <property type="evidence" value="ECO:0007669"/>
    <property type="project" value="InterPro"/>
</dbReference>
<dbReference type="GO" id="GO:0010041">
    <property type="term" value="P:response to iron(III) ion"/>
    <property type="evidence" value="ECO:0007669"/>
    <property type="project" value="TreeGrafter"/>
</dbReference>
<dbReference type="HAMAP" id="MF_01165">
    <property type="entry name" value="ArnT_transfer"/>
    <property type="match status" value="1"/>
</dbReference>
<dbReference type="InterPro" id="IPR022839">
    <property type="entry name" value="ArnT_tfrase"/>
</dbReference>
<dbReference type="InterPro" id="IPR003342">
    <property type="entry name" value="Glyco_trans_39/83"/>
</dbReference>
<dbReference type="InterPro" id="IPR050297">
    <property type="entry name" value="LipidA_mod_glycosyltrf_83"/>
</dbReference>
<dbReference type="NCBIfam" id="NF009784">
    <property type="entry name" value="PRK13279.1"/>
    <property type="match status" value="1"/>
</dbReference>
<dbReference type="PANTHER" id="PTHR33908">
    <property type="entry name" value="MANNOSYLTRANSFERASE YKCB-RELATED"/>
    <property type="match status" value="1"/>
</dbReference>
<dbReference type="PANTHER" id="PTHR33908:SF3">
    <property type="entry name" value="UNDECAPRENYL PHOSPHATE-ALPHA-4-AMINO-4-DEOXY-L-ARABINOSE ARABINOSYL TRANSFERASE"/>
    <property type="match status" value="1"/>
</dbReference>
<dbReference type="Pfam" id="PF02366">
    <property type="entry name" value="PMT"/>
    <property type="match status" value="1"/>
</dbReference>
<organism>
    <name type="scientific">Salmonella paratyphi B (strain ATCC BAA-1250 / SPB7)</name>
    <dbReference type="NCBI Taxonomy" id="1016998"/>
    <lineage>
        <taxon>Bacteria</taxon>
        <taxon>Pseudomonadati</taxon>
        <taxon>Pseudomonadota</taxon>
        <taxon>Gammaproteobacteria</taxon>
        <taxon>Enterobacterales</taxon>
        <taxon>Enterobacteriaceae</taxon>
        <taxon>Salmonella</taxon>
    </lineage>
</organism>
<accession>A9N5B0</accession>
<protein>
    <recommendedName>
        <fullName evidence="1">Undecaprenyl phosphate-alpha-4-amino-4-deoxy-L-arabinose arabinosyl transferase</fullName>
        <ecNumber evidence="1">2.4.2.43</ecNumber>
    </recommendedName>
    <alternativeName>
        <fullName evidence="1">4-amino-4-deoxy-L-arabinose lipid A transferase</fullName>
    </alternativeName>
    <alternativeName>
        <fullName evidence="1">Lipid IV(A) 4-amino-4-deoxy-L-arabinosyltransferase</fullName>
    </alternativeName>
    <alternativeName>
        <fullName evidence="1">Undecaprenyl phosphate-alpha-L-Ara4N transferase</fullName>
    </alternativeName>
</protein>
<comment type="function">
    <text evidence="1">Catalyzes the transfer of the L-Ara4N moiety of the glycolipid undecaprenyl phosphate-alpha-L-Ara4N to lipid A. The modified arabinose is attached to lipid A and is required for resistance to polymyxin and cationic antimicrobial peptides.</text>
</comment>
<comment type="catalytic activity">
    <reaction evidence="1">
        <text>4-amino-4-deoxy-alpha-L-arabinopyranosyl di-trans,octa-cis-undecaprenyl phosphate + lipid IVA = lipid IIA + di-trans,octa-cis-undecaprenyl phosphate.</text>
        <dbReference type="EC" id="2.4.2.43"/>
    </reaction>
</comment>
<comment type="pathway">
    <text evidence="1">Lipopolysaccharide metabolism; 4-amino-4-deoxy-beta-L-arabinose-lipid A biosynthesis.</text>
</comment>
<comment type="subcellular location">
    <subcellularLocation>
        <location evidence="1">Cell inner membrane</location>
        <topology evidence="1">Multi-pass membrane protein</topology>
    </subcellularLocation>
</comment>
<comment type="similarity">
    <text evidence="1">Belongs to the glycosyltransferase 83 family.</text>
</comment>
<reference key="1">
    <citation type="submission" date="2007-11" db="EMBL/GenBank/DDBJ databases">
        <authorList>
            <consortium name="The Salmonella enterica serovar Paratyphi B Genome Sequencing Project"/>
            <person name="McClelland M."/>
            <person name="Sanderson E.K."/>
            <person name="Porwollik S."/>
            <person name="Spieth J."/>
            <person name="Clifton W.S."/>
            <person name="Fulton R."/>
            <person name="Cordes M."/>
            <person name="Wollam A."/>
            <person name="Shah N."/>
            <person name="Pepin K."/>
            <person name="Bhonagiri V."/>
            <person name="Nash W."/>
            <person name="Johnson M."/>
            <person name="Thiruvilangam P."/>
            <person name="Wilson R."/>
        </authorList>
    </citation>
    <scope>NUCLEOTIDE SEQUENCE [LARGE SCALE GENOMIC DNA]</scope>
    <source>
        <strain>ATCC BAA-1250 / SPB7</strain>
    </source>
</reference>
<evidence type="ECO:0000255" key="1">
    <source>
        <dbReference type="HAMAP-Rule" id="MF_01165"/>
    </source>
</evidence>
<name>ARNT_SALPB</name>
<gene>
    <name evidence="1" type="primary">arnT</name>
    <name type="ordered locus">SPAB_00680</name>
</gene>
<feature type="chain" id="PRO_0000380031" description="Undecaprenyl phosphate-alpha-4-amino-4-deoxy-L-arabinose arabinosyl transferase">
    <location>
        <begin position="1"/>
        <end position="548"/>
    </location>
</feature>
<feature type="transmembrane region" description="Helical" evidence="1">
    <location>
        <begin position="9"/>
        <end position="29"/>
    </location>
</feature>
<feature type="transmembrane region" description="Helical" evidence="1">
    <location>
        <begin position="82"/>
        <end position="102"/>
    </location>
</feature>
<feature type="transmembrane region" description="Helical" evidence="1">
    <location>
        <begin position="114"/>
        <end position="134"/>
    </location>
</feature>
<feature type="transmembrane region" description="Helical" evidence="1">
    <location>
        <begin position="137"/>
        <end position="157"/>
    </location>
</feature>
<feature type="transmembrane region" description="Helical" evidence="1">
    <location>
        <begin position="163"/>
        <end position="185"/>
    </location>
</feature>
<feature type="transmembrane region" description="Helical" evidence="1">
    <location>
        <begin position="205"/>
        <end position="225"/>
    </location>
</feature>
<feature type="transmembrane region" description="Helical" evidence="1">
    <location>
        <begin position="256"/>
        <end position="276"/>
    </location>
</feature>
<feature type="transmembrane region" description="Helical" evidence="1">
    <location>
        <begin position="289"/>
        <end position="309"/>
    </location>
</feature>
<feature type="transmembrane region" description="Helical" evidence="1">
    <location>
        <begin position="311"/>
        <end position="331"/>
    </location>
</feature>
<feature type="transmembrane region" description="Helical" evidence="1">
    <location>
        <begin position="345"/>
        <end position="365"/>
    </location>
</feature>
<feature type="transmembrane region" description="Helical" evidence="1">
    <location>
        <begin position="381"/>
        <end position="401"/>
    </location>
</feature>
<feature type="transmembrane region" description="Helical" evidence="1">
    <location>
        <begin position="405"/>
        <end position="425"/>
    </location>
</feature>